<gene>
    <name type="primary">tsdA</name>
    <name type="ordered locus">PST_2843</name>
</gene>
<reference key="1">
    <citation type="journal article" date="2008" name="Proc. Natl. Acad. Sci. U.S.A.">
        <title>Nitrogen fixation island and rhizosphere competence traits in the genome of root-associated Pseudomonas stutzeri A1501.</title>
        <authorList>
            <person name="Yan Y."/>
            <person name="Yang J."/>
            <person name="Dou Y."/>
            <person name="Chen M."/>
            <person name="Ping S."/>
            <person name="Peng J."/>
            <person name="Lu W."/>
            <person name="Zhang W."/>
            <person name="Yao Z."/>
            <person name="Li H."/>
            <person name="Liu W."/>
            <person name="He S."/>
            <person name="Geng L."/>
            <person name="Zhang X."/>
            <person name="Yang F."/>
            <person name="Yu H."/>
            <person name="Zhan Y."/>
            <person name="Li D."/>
            <person name="Lin Z."/>
            <person name="Wang Y."/>
            <person name="Elmerich C."/>
            <person name="Lin M."/>
            <person name="Jin Q."/>
        </authorList>
    </citation>
    <scope>NUCLEOTIDE SEQUENCE [LARGE SCALE GENOMIC DNA]</scope>
    <source>
        <strain>A1501</strain>
    </source>
</reference>
<reference key="2">
    <citation type="journal article" date="2012" name="Environ. Microbiol.">
        <title>Thiosulfate dehydrogenase: a widespread unusual acidophilic c-type cytochrome.</title>
        <authorList>
            <person name="Denkmann K."/>
            <person name="Grein F."/>
            <person name="Zigann R."/>
            <person name="Siemen A."/>
            <person name="Bergmann J."/>
            <person name="van Helmont S."/>
            <person name="Nicolai A."/>
            <person name="Pereira I.A."/>
            <person name="Dahl C."/>
        </authorList>
    </citation>
    <scope>FUNCTION</scope>
    <scope>CATALYTIC ACTIVITY</scope>
    <scope>BIOPHYSICOCHEMICAL PROPERTIES</scope>
    <scope>SUBUNIT</scope>
</reference>
<name>TSDA_STUS1</name>
<dbReference type="EC" id="1.8.2.2"/>
<dbReference type="EMBL" id="CP000304">
    <property type="protein sequence ID" value="ABP80489.1"/>
    <property type="molecule type" value="Genomic_DNA"/>
</dbReference>
<dbReference type="RefSeq" id="WP_011913946.1">
    <property type="nucleotide sequence ID" value="NC_009434.1"/>
</dbReference>
<dbReference type="SMR" id="A4VND8"/>
<dbReference type="KEGG" id="psa:PST_2843"/>
<dbReference type="eggNOG" id="COG3258">
    <property type="taxonomic scope" value="Bacteria"/>
</dbReference>
<dbReference type="HOGENOM" id="CLU_058582_1_0_6"/>
<dbReference type="Proteomes" id="UP000000233">
    <property type="component" value="Chromosome"/>
</dbReference>
<dbReference type="GO" id="GO:0042597">
    <property type="term" value="C:periplasmic space"/>
    <property type="evidence" value="ECO:0007669"/>
    <property type="project" value="UniProtKB-SubCell"/>
</dbReference>
<dbReference type="GO" id="GO:0009055">
    <property type="term" value="F:electron transfer activity"/>
    <property type="evidence" value="ECO:0007669"/>
    <property type="project" value="InterPro"/>
</dbReference>
<dbReference type="GO" id="GO:0020037">
    <property type="term" value="F:heme binding"/>
    <property type="evidence" value="ECO:0007669"/>
    <property type="project" value="InterPro"/>
</dbReference>
<dbReference type="GO" id="GO:0046872">
    <property type="term" value="F:metal ion binding"/>
    <property type="evidence" value="ECO:0007669"/>
    <property type="project" value="UniProtKB-KW"/>
</dbReference>
<dbReference type="GO" id="GO:0050338">
    <property type="term" value="F:thiosulfate dehydrogenase activity"/>
    <property type="evidence" value="ECO:0000314"/>
    <property type="project" value="UniProtKB"/>
</dbReference>
<dbReference type="FunFam" id="1.10.760.10:FF:000036">
    <property type="entry name" value="Thiosulfate dehydrogenase"/>
    <property type="match status" value="1"/>
</dbReference>
<dbReference type="FunFam" id="1.10.760.10:FF:000039">
    <property type="entry name" value="Thiosulfate dehydrogenase"/>
    <property type="match status" value="1"/>
</dbReference>
<dbReference type="Gene3D" id="1.10.760.10">
    <property type="entry name" value="Cytochrome c-like domain"/>
    <property type="match status" value="2"/>
</dbReference>
<dbReference type="InterPro" id="IPR009056">
    <property type="entry name" value="Cyt_c-like_dom"/>
</dbReference>
<dbReference type="InterPro" id="IPR036909">
    <property type="entry name" value="Cyt_c-like_dom_sf"/>
</dbReference>
<dbReference type="InterPro" id="IPR051459">
    <property type="entry name" value="Cytochrome_c-type_DH"/>
</dbReference>
<dbReference type="PANTHER" id="PTHR35008">
    <property type="entry name" value="BLL4482 PROTEIN-RELATED"/>
    <property type="match status" value="1"/>
</dbReference>
<dbReference type="PANTHER" id="PTHR35008:SF9">
    <property type="entry name" value="CYTOCHROME C DOMAIN-CONTAINING PROTEIN"/>
    <property type="match status" value="1"/>
</dbReference>
<dbReference type="Pfam" id="PF13442">
    <property type="entry name" value="Cytochrome_CBB3"/>
    <property type="match status" value="1"/>
</dbReference>
<dbReference type="Pfam" id="PF21342">
    <property type="entry name" value="SoxA-TsdA_cyt-c"/>
    <property type="match status" value="1"/>
</dbReference>
<dbReference type="SUPFAM" id="SSF46626">
    <property type="entry name" value="Cytochrome c"/>
    <property type="match status" value="2"/>
</dbReference>
<dbReference type="PROSITE" id="PS51007">
    <property type="entry name" value="CYTC"/>
    <property type="match status" value="2"/>
</dbReference>
<keyword id="KW-0349">Heme</keyword>
<keyword id="KW-0408">Iron</keyword>
<keyword id="KW-0479">Metal-binding</keyword>
<keyword id="KW-0560">Oxidoreductase</keyword>
<keyword id="KW-0574">Periplasm</keyword>
<keyword id="KW-1185">Reference proteome</keyword>
<keyword id="KW-0677">Repeat</keyword>
<keyword id="KW-0732">Signal</keyword>
<evidence type="ECO:0000250" key="1"/>
<evidence type="ECO:0000255" key="2"/>
<evidence type="ECO:0000255" key="3">
    <source>
        <dbReference type="PROSITE-ProRule" id="PRU00433"/>
    </source>
</evidence>
<evidence type="ECO:0000269" key="4">
    <source>
    </source>
</evidence>
<evidence type="ECO:0000305" key="5">
    <source>
    </source>
</evidence>
<organism>
    <name type="scientific">Stutzerimonas stutzeri (strain A1501)</name>
    <name type="common">Pseudomonas stutzeri</name>
    <dbReference type="NCBI Taxonomy" id="379731"/>
    <lineage>
        <taxon>Bacteria</taxon>
        <taxon>Pseudomonadati</taxon>
        <taxon>Pseudomonadota</taxon>
        <taxon>Gammaproteobacteria</taxon>
        <taxon>Pseudomonadales</taxon>
        <taxon>Pseudomonadaceae</taxon>
        <taxon>Stutzerimonas</taxon>
    </lineage>
</organism>
<comment type="function">
    <text evidence="4">Catalyzes the oxidation of 2 molecules of thiosulfate to tetrathionate, using TsdB as an electron acceptor.</text>
</comment>
<comment type="catalytic activity">
    <reaction evidence="4">
        <text>2 thiosulfate + 2 Fe(III)-[cytochrome c] = tetrathionate + 2 Fe(II)-[cytochrome c] + 2 H(+)</text>
        <dbReference type="Rhea" id="RHEA:20549"/>
        <dbReference type="Rhea" id="RHEA-COMP:10350"/>
        <dbReference type="Rhea" id="RHEA-COMP:14399"/>
        <dbReference type="ChEBI" id="CHEBI:15226"/>
        <dbReference type="ChEBI" id="CHEBI:15378"/>
        <dbReference type="ChEBI" id="CHEBI:29033"/>
        <dbReference type="ChEBI" id="CHEBI:29034"/>
        <dbReference type="ChEBI" id="CHEBI:33542"/>
        <dbReference type="EC" id="1.8.2.2"/>
    </reaction>
</comment>
<comment type="biophysicochemical properties">
    <kinetics>
        <Vmax evidence="4">31000.0 umol/min/mg enzyme (at pH 4.2)</Vmax>
    </kinetics>
    <temperatureDependence>
        <text evidence="4">Optimum temperature is 20 degrees Celsius.</text>
    </temperatureDependence>
</comment>
<comment type="subunit">
    <text evidence="5">Monomer.</text>
</comment>
<comment type="subcellular location">
    <subcellularLocation>
        <location evidence="1">Periplasm</location>
    </subcellularLocation>
</comment>
<comment type="PTM">
    <text evidence="4">Binds 2 heme c groups covalently per subunit.</text>
</comment>
<accession>A4VND8</accession>
<protein>
    <recommendedName>
        <fullName>Thiosulfate dehydrogenase</fullName>
        <ecNumber>1.8.2.2</ecNumber>
    </recommendedName>
    <alternativeName>
        <fullName>Tetrathionate synthase</fullName>
    </alternativeName>
</protein>
<feature type="signal peptide" evidence="2">
    <location>
        <begin position="1"/>
        <end position="20"/>
    </location>
</feature>
<feature type="chain" id="PRO_0000430263" description="Thiosulfate dehydrogenase">
    <location>
        <begin position="21"/>
        <end position="307"/>
    </location>
</feature>
<feature type="domain" description="Cytochrome c 1" evidence="3">
    <location>
        <begin position="59"/>
        <end position="156"/>
    </location>
</feature>
<feature type="domain" description="Cytochrome c 2" evidence="3">
    <location>
        <begin position="180"/>
        <end position="265"/>
    </location>
</feature>
<feature type="binding site" description="covalent" evidence="3">
    <location>
        <position position="85"/>
    </location>
    <ligand>
        <name>heme c</name>
        <dbReference type="ChEBI" id="CHEBI:61717"/>
        <label>1</label>
    </ligand>
</feature>
<feature type="binding site" description="covalent" evidence="3">
    <location>
        <position position="88"/>
    </location>
    <ligand>
        <name>heme c</name>
        <dbReference type="ChEBI" id="CHEBI:61717"/>
        <label>1</label>
    </ligand>
</feature>
<feature type="binding site" description="axial binding residue" evidence="3">
    <location>
        <position position="89"/>
    </location>
    <ligand>
        <name>heme c</name>
        <dbReference type="ChEBI" id="CHEBI:61717"/>
        <label>1</label>
    </ligand>
    <ligandPart>
        <name>Fe</name>
        <dbReference type="ChEBI" id="CHEBI:18248"/>
    </ligandPart>
</feature>
<feature type="binding site" description="covalent" evidence="3">
    <location>
        <position position="193"/>
    </location>
    <ligand>
        <name>heme c</name>
        <dbReference type="ChEBI" id="CHEBI:61717"/>
        <label>2</label>
    </ligand>
</feature>
<feature type="binding site" description="covalent" evidence="3">
    <location>
        <position position="196"/>
    </location>
    <ligand>
        <name>heme c</name>
        <dbReference type="ChEBI" id="CHEBI:61717"/>
        <label>2</label>
    </ligand>
</feature>
<feature type="binding site" description="axial binding residue" evidence="3">
    <location>
        <position position="197"/>
    </location>
    <ligand>
        <name>heme c</name>
        <dbReference type="ChEBI" id="CHEBI:61717"/>
        <label>2</label>
    </ligand>
    <ligandPart>
        <name>Fe</name>
        <dbReference type="ChEBI" id="CHEBI:18248"/>
    </ligandPart>
</feature>
<proteinExistence type="evidence at protein level"/>
<sequence length="307" mass="33116">MNTQLLVTLLAMSIGGVALAAEIKMDDQSQLTQKAGKGAGESYFQPPQEKDLPANAYGELVQQGRAIFVDTQKYAAEYVGNGMNCTNCHLEQGRKANSAPLWGAYPMYPAYRKKNDKVNSYAERVQGCFQFSMNGTPPAADSHVINALTAYSYWLSTGAPTGQELPGRAYPEVPQPQGGFDIAKGKQIYAEQCAVCHGDDGQGQKAGGGYVFPPLWGKDSFNWGAGMHRINTAAAFIKESMPLGKGGSLSDADAWHVAAYMNSHERPQDPRLIEGSVEKTRLKYHANDGVNLYGQQVDGALLGQGVK</sequence>